<gene>
    <name evidence="9" type="primary">Tmprss4</name>
    <name evidence="7" type="synonym">Cap2</name>
</gene>
<reference key="1">
    <citation type="journal article" date="2002" name="J. Gen. Physiol.">
        <title>Synergistic activation of ENaC by three membrane-bound channel-activating serine proteases (mCAP1, mCAP2, and mCAP3) and serum- and glucocorticoid-regulated kinase (Sgk1) in Xenopus oocytes.</title>
        <authorList>
            <person name="Vuagniaux G."/>
            <person name="Vallet V."/>
            <person name="Jaeger N.F."/>
            <person name="Hummler E."/>
            <person name="Rossier B.C."/>
        </authorList>
    </citation>
    <scope>NUCLEOTIDE SEQUENCE [MRNA]</scope>
    <scope>FUNCTION</scope>
</reference>
<reference key="2">
    <citation type="journal article" date="2004" name="Genome Res.">
        <title>The status, quality, and expansion of the NIH full-length cDNA project: the Mammalian Gene Collection (MGC).</title>
        <authorList>
            <consortium name="The MGC Project Team"/>
        </authorList>
    </citation>
    <scope>NUCLEOTIDE SEQUENCE [LARGE SCALE MRNA]</scope>
    <source>
        <tissue>Mammary tumor</tissue>
    </source>
</reference>
<accession>Q8VCA5</accession>
<evidence type="ECO:0000250" key="1"/>
<evidence type="ECO:0000250" key="2">
    <source>
        <dbReference type="UniProtKB" id="Q9NRS4"/>
    </source>
</evidence>
<evidence type="ECO:0000255" key="3"/>
<evidence type="ECO:0000255" key="4">
    <source>
        <dbReference type="PROSITE-ProRule" id="PRU00196"/>
    </source>
</evidence>
<evidence type="ECO:0000255" key="5">
    <source>
        <dbReference type="PROSITE-ProRule" id="PRU00274"/>
    </source>
</evidence>
<evidence type="ECO:0000269" key="6">
    <source>
    </source>
</evidence>
<evidence type="ECO:0000303" key="7">
    <source>
    </source>
</evidence>
<evidence type="ECO:0000305" key="8"/>
<evidence type="ECO:0000312" key="9">
    <source>
        <dbReference type="MGI" id="MGI:2384877"/>
    </source>
</evidence>
<feature type="chain" id="PRO_0000088693" description="Transmembrane protease serine 4">
    <location>
        <begin position="1"/>
        <end position="435"/>
    </location>
</feature>
<feature type="chain" id="PRO_0000451628" description="Transmembrane protease serine 4 catalytic chain">
    <location>
        <begin status="unknown"/>
        <end position="435"/>
    </location>
</feature>
<feature type="topological domain" description="Cytoplasmic" evidence="3">
    <location>
        <begin position="1"/>
        <end position="30"/>
    </location>
</feature>
<feature type="transmembrane region" description="Helical; Signal-anchor for type II membrane protein" evidence="3">
    <location>
        <begin position="31"/>
        <end position="51"/>
    </location>
</feature>
<feature type="topological domain" description="Extracellular" evidence="3">
    <location>
        <begin position="52"/>
        <end position="435"/>
    </location>
</feature>
<feature type="domain" description="LDL-receptor class A">
    <location>
        <begin position="59"/>
        <end position="101"/>
    </location>
</feature>
<feature type="domain" description="SRCR" evidence="4">
    <location>
        <begin position="102"/>
        <end position="202"/>
    </location>
</feature>
<feature type="domain" description="Peptidase S1" evidence="5">
    <location>
        <begin position="203"/>
        <end position="432"/>
    </location>
</feature>
<feature type="active site" description="Charge relay system" evidence="1">
    <location>
        <position position="243"/>
    </location>
</feature>
<feature type="active site" description="Charge relay system" evidence="1">
    <location>
        <position position="288"/>
    </location>
</feature>
<feature type="active site" description="Charge relay system" evidence="1">
    <location>
        <position position="385"/>
    </location>
</feature>
<feature type="site" description="Cleavage" evidence="3">
    <location>
        <begin position="202"/>
        <end position="203"/>
    </location>
</feature>
<feature type="glycosylation site" description="N-linked (GlcNAc...) asparagine" evidence="3">
    <location>
        <position position="128"/>
    </location>
</feature>
<feature type="glycosylation site" description="N-linked (GlcNAc...) asparagine" evidence="3">
    <location>
        <position position="176"/>
    </location>
</feature>
<feature type="disulfide bond" evidence="1">
    <location>
        <begin position="62"/>
        <end position="81"/>
    </location>
</feature>
<feature type="disulfide bond" evidence="1">
    <location>
        <begin position="75"/>
        <end position="90"/>
    </location>
</feature>
<feature type="disulfide bond" evidence="1">
    <location>
        <begin position="125"/>
        <end position="181"/>
    </location>
</feature>
<feature type="disulfide bond" evidence="1">
    <location>
        <begin position="138"/>
        <end position="191"/>
    </location>
</feature>
<feature type="disulfide bond" evidence="1">
    <location>
        <begin position="194"/>
        <end position="308"/>
    </location>
</feature>
<feature type="disulfide bond" evidence="1">
    <location>
        <begin position="228"/>
        <end position="244"/>
    </location>
</feature>
<feature type="disulfide bond" evidence="1">
    <location>
        <begin position="354"/>
        <end position="370"/>
    </location>
</feature>
<feature type="disulfide bond" evidence="1">
    <location>
        <begin position="381"/>
        <end position="408"/>
    </location>
</feature>
<proteinExistence type="evidence at transcript level"/>
<comment type="function">
    <text evidence="2 6">Plasma membrane-anchored serine protease that directly induces processing of pro-uPA/PLAU into the active form through proteolytic activity (By similarity). Seems to be capable of activating ENaC (PubMed:12149280).</text>
</comment>
<comment type="subcellular location">
    <subcellularLocation>
        <location evidence="2">Cell membrane</location>
        <topology evidence="2">Single-pass type II membrane protein</topology>
    </subcellularLocation>
</comment>
<comment type="subcellular location">
    <molecule>Transmembrane protease serine 4 catalytic chain</molecule>
    <subcellularLocation>
        <location evidence="2">Secreted</location>
    </subcellularLocation>
    <text evidence="2">Activated by cleavage and secreted.</text>
</comment>
<comment type="PTM">
    <text evidence="2">Proteolytically processed; probably by an autocatalytic mechanism.</text>
</comment>
<comment type="similarity">
    <text evidence="5">Belongs to the peptidase S1 family.</text>
</comment>
<sequence length="435" mass="47496">MESDSGQPLNNRDIVPFRKPRRPQETFKKVGIPIIAVLLSLIALVIVALLIKVILDKYYFICGSPLTFIQRGQLCDGHLDCASGEDEEHCVKDFPEKPGVAVRLSKDRSTLQVLDAATGTWASVCFDNFTEALAKTACRQMGYDSQPAFRAVEIRPDQNLPVAQVTGNSQELQVQNGSRSCLSGSLVSLRCLDCGKSLKTPRVVGGVEAPVDSWPWQVSIQYNKQHVCGGSILDPHWILTAAHCFRKYLDVSSWKVRAGSNILGNSPSLPVAKIFIAEPNPLYPKEKDIALVKLQMPLTFSGSVRPICLPFSDEVLVPATPVWVIGWGFTEENGGKMSDMLLQASVQVIDSTRCNAEDAYEGEVTAEMLCAGTPQGGKDTCQGDSGGPLMYHSDKWQVVGIVSWGHGCGGPSTPGVYTKVTAYLNWIYNVRKSEM</sequence>
<dbReference type="EC" id="3.4.21.-"/>
<dbReference type="EMBL" id="AY043240">
    <property type="protein sequence ID" value="AAK85307.1"/>
    <property type="molecule type" value="mRNA"/>
</dbReference>
<dbReference type="EMBL" id="BC021368">
    <property type="protein sequence ID" value="AAH21368.1"/>
    <property type="molecule type" value="mRNA"/>
</dbReference>
<dbReference type="CCDS" id="CCDS40607.1"/>
<dbReference type="RefSeq" id="NP_663378.1">
    <property type="nucleotide sequence ID" value="NM_145403.3"/>
</dbReference>
<dbReference type="SMR" id="Q8VCA5"/>
<dbReference type="BioGRID" id="229534">
    <property type="interactions" value="7"/>
</dbReference>
<dbReference type="FunCoup" id="Q8VCA5">
    <property type="interactions" value="225"/>
</dbReference>
<dbReference type="STRING" id="10090.ENSMUSP00000034599"/>
<dbReference type="MEROPS" id="S01.034"/>
<dbReference type="GlyCosmos" id="Q8VCA5">
    <property type="glycosylation" value="2 sites, No reported glycans"/>
</dbReference>
<dbReference type="GlyGen" id="Q8VCA5">
    <property type="glycosylation" value="3 sites"/>
</dbReference>
<dbReference type="iPTMnet" id="Q8VCA5"/>
<dbReference type="PhosphoSitePlus" id="Q8VCA5"/>
<dbReference type="PaxDb" id="10090-ENSMUSP00000034599"/>
<dbReference type="ProteomicsDB" id="259045"/>
<dbReference type="Antibodypedia" id="1732">
    <property type="antibodies" value="310 antibodies from 31 providers"/>
</dbReference>
<dbReference type="DNASU" id="214523"/>
<dbReference type="Ensembl" id="ENSMUST00000034599.15">
    <property type="protein sequence ID" value="ENSMUSP00000034599.9"/>
    <property type="gene ID" value="ENSMUSG00000032091.16"/>
</dbReference>
<dbReference type="GeneID" id="214523"/>
<dbReference type="KEGG" id="mmu:214523"/>
<dbReference type="UCSC" id="uc009pfi.1">
    <property type="organism name" value="mouse"/>
</dbReference>
<dbReference type="AGR" id="MGI:2384877"/>
<dbReference type="CTD" id="56649"/>
<dbReference type="MGI" id="MGI:2384877">
    <property type="gene designation" value="Tmprss4"/>
</dbReference>
<dbReference type="VEuPathDB" id="HostDB:ENSMUSG00000032091"/>
<dbReference type="eggNOG" id="KOG3627">
    <property type="taxonomic scope" value="Eukaryota"/>
</dbReference>
<dbReference type="GeneTree" id="ENSGT01020000230389"/>
<dbReference type="HOGENOM" id="CLU_006842_19_2_1"/>
<dbReference type="InParanoid" id="Q8VCA5"/>
<dbReference type="OMA" id="GNWASAC"/>
<dbReference type="OrthoDB" id="6380398at2759"/>
<dbReference type="PhylomeDB" id="Q8VCA5"/>
<dbReference type="TreeFam" id="TF351678"/>
<dbReference type="BioGRID-ORCS" id="214523">
    <property type="hits" value="0 hits in 80 CRISPR screens"/>
</dbReference>
<dbReference type="ChiTaRS" id="Tmprss4">
    <property type="organism name" value="mouse"/>
</dbReference>
<dbReference type="PRO" id="PR:Q8VCA5"/>
<dbReference type="Proteomes" id="UP000000589">
    <property type="component" value="Chromosome 9"/>
</dbReference>
<dbReference type="RNAct" id="Q8VCA5">
    <property type="molecule type" value="protein"/>
</dbReference>
<dbReference type="Bgee" id="ENSMUSG00000032091">
    <property type="expression patterns" value="Expressed in right colon and 92 other cell types or tissues"/>
</dbReference>
<dbReference type="ExpressionAtlas" id="Q8VCA5">
    <property type="expression patterns" value="baseline and differential"/>
</dbReference>
<dbReference type="GO" id="GO:0005615">
    <property type="term" value="C:extracellular space"/>
    <property type="evidence" value="ECO:0000250"/>
    <property type="project" value="UniProtKB"/>
</dbReference>
<dbReference type="GO" id="GO:0005886">
    <property type="term" value="C:plasma membrane"/>
    <property type="evidence" value="ECO:0007669"/>
    <property type="project" value="UniProtKB-SubCell"/>
</dbReference>
<dbReference type="GO" id="GO:0030141">
    <property type="term" value="C:secretory granule"/>
    <property type="evidence" value="ECO:0000314"/>
    <property type="project" value="MGI"/>
</dbReference>
<dbReference type="GO" id="GO:0004252">
    <property type="term" value="F:serine-type endopeptidase activity"/>
    <property type="evidence" value="ECO:0007669"/>
    <property type="project" value="InterPro"/>
</dbReference>
<dbReference type="GO" id="GO:0008236">
    <property type="term" value="F:serine-type peptidase activity"/>
    <property type="evidence" value="ECO:0000250"/>
    <property type="project" value="UniProtKB"/>
</dbReference>
<dbReference type="GO" id="GO:0045967">
    <property type="term" value="P:negative regulation of growth rate"/>
    <property type="evidence" value="ECO:0000266"/>
    <property type="project" value="MGI"/>
</dbReference>
<dbReference type="GO" id="GO:0046598">
    <property type="term" value="P:positive regulation of viral entry into host cell"/>
    <property type="evidence" value="ECO:0000250"/>
    <property type="project" value="UniProtKB"/>
</dbReference>
<dbReference type="GO" id="GO:0016485">
    <property type="term" value="P:protein processing"/>
    <property type="evidence" value="ECO:0000250"/>
    <property type="project" value="UniProtKB"/>
</dbReference>
<dbReference type="GO" id="GO:0006508">
    <property type="term" value="P:proteolysis"/>
    <property type="evidence" value="ECO:0000250"/>
    <property type="project" value="UniProtKB"/>
</dbReference>
<dbReference type="GO" id="GO:0010468">
    <property type="term" value="P:regulation of gene expression"/>
    <property type="evidence" value="ECO:0000266"/>
    <property type="project" value="MGI"/>
</dbReference>
<dbReference type="GO" id="GO:0009611">
    <property type="term" value="P:response to wounding"/>
    <property type="evidence" value="ECO:0000315"/>
    <property type="project" value="MGI"/>
</dbReference>
<dbReference type="CDD" id="cd00112">
    <property type="entry name" value="LDLa"/>
    <property type="match status" value="1"/>
</dbReference>
<dbReference type="CDD" id="cd00190">
    <property type="entry name" value="Tryp_SPc"/>
    <property type="match status" value="1"/>
</dbReference>
<dbReference type="FunFam" id="2.40.10.10:FF:000003">
    <property type="entry name" value="Transmembrane serine protease 3"/>
    <property type="match status" value="1"/>
</dbReference>
<dbReference type="FunFam" id="4.10.400.10:FF:000141">
    <property type="entry name" value="Transmembrane serine protease 4"/>
    <property type="match status" value="1"/>
</dbReference>
<dbReference type="Gene3D" id="4.10.400.10">
    <property type="entry name" value="Low-density Lipoprotein Receptor"/>
    <property type="match status" value="1"/>
</dbReference>
<dbReference type="Gene3D" id="3.10.250.10">
    <property type="entry name" value="SRCR-like domain"/>
    <property type="match status" value="1"/>
</dbReference>
<dbReference type="Gene3D" id="2.40.10.10">
    <property type="entry name" value="Trypsin-like serine proteases"/>
    <property type="match status" value="2"/>
</dbReference>
<dbReference type="InterPro" id="IPR036055">
    <property type="entry name" value="LDL_receptor-like_sf"/>
</dbReference>
<dbReference type="InterPro" id="IPR002172">
    <property type="entry name" value="LDrepeatLR_classA_rpt"/>
</dbReference>
<dbReference type="InterPro" id="IPR009003">
    <property type="entry name" value="Peptidase_S1_PA"/>
</dbReference>
<dbReference type="InterPro" id="IPR043504">
    <property type="entry name" value="Peptidase_S1_PA_chymotrypsin"/>
</dbReference>
<dbReference type="InterPro" id="IPR001314">
    <property type="entry name" value="Peptidase_S1A"/>
</dbReference>
<dbReference type="InterPro" id="IPR001190">
    <property type="entry name" value="SRCR"/>
</dbReference>
<dbReference type="InterPro" id="IPR036772">
    <property type="entry name" value="SRCR-like_dom_sf"/>
</dbReference>
<dbReference type="InterPro" id="IPR001254">
    <property type="entry name" value="Trypsin_dom"/>
</dbReference>
<dbReference type="InterPro" id="IPR018114">
    <property type="entry name" value="TRYPSIN_HIS"/>
</dbReference>
<dbReference type="InterPro" id="IPR033116">
    <property type="entry name" value="TRYPSIN_SER"/>
</dbReference>
<dbReference type="PANTHER" id="PTHR24252">
    <property type="entry name" value="ACROSIN-RELATED"/>
    <property type="match status" value="1"/>
</dbReference>
<dbReference type="PANTHER" id="PTHR24252:SF17">
    <property type="entry name" value="SUPPRESSOR OF TUMORIGENICITY 14 PROTEIN HOMOLOG-RELATED"/>
    <property type="match status" value="1"/>
</dbReference>
<dbReference type="Pfam" id="PF15494">
    <property type="entry name" value="SRCR_2"/>
    <property type="match status" value="1"/>
</dbReference>
<dbReference type="Pfam" id="PF00089">
    <property type="entry name" value="Trypsin"/>
    <property type="match status" value="1"/>
</dbReference>
<dbReference type="PRINTS" id="PR00722">
    <property type="entry name" value="CHYMOTRYPSIN"/>
</dbReference>
<dbReference type="SMART" id="SM00202">
    <property type="entry name" value="SR"/>
    <property type="match status" value="1"/>
</dbReference>
<dbReference type="SMART" id="SM00020">
    <property type="entry name" value="Tryp_SPc"/>
    <property type="match status" value="1"/>
</dbReference>
<dbReference type="SUPFAM" id="SSF57424">
    <property type="entry name" value="LDL receptor-like module"/>
    <property type="match status" value="1"/>
</dbReference>
<dbReference type="SUPFAM" id="SSF56487">
    <property type="entry name" value="SRCR-like"/>
    <property type="match status" value="1"/>
</dbReference>
<dbReference type="SUPFAM" id="SSF50494">
    <property type="entry name" value="Trypsin-like serine proteases"/>
    <property type="match status" value="1"/>
</dbReference>
<dbReference type="PROSITE" id="PS50287">
    <property type="entry name" value="SRCR_2"/>
    <property type="match status" value="1"/>
</dbReference>
<dbReference type="PROSITE" id="PS50240">
    <property type="entry name" value="TRYPSIN_DOM"/>
    <property type="match status" value="1"/>
</dbReference>
<dbReference type="PROSITE" id="PS00134">
    <property type="entry name" value="TRYPSIN_HIS"/>
    <property type="match status" value="1"/>
</dbReference>
<dbReference type="PROSITE" id="PS00135">
    <property type="entry name" value="TRYPSIN_SER"/>
    <property type="match status" value="1"/>
</dbReference>
<organism>
    <name type="scientific">Mus musculus</name>
    <name type="common">Mouse</name>
    <dbReference type="NCBI Taxonomy" id="10090"/>
    <lineage>
        <taxon>Eukaryota</taxon>
        <taxon>Metazoa</taxon>
        <taxon>Chordata</taxon>
        <taxon>Craniata</taxon>
        <taxon>Vertebrata</taxon>
        <taxon>Euteleostomi</taxon>
        <taxon>Mammalia</taxon>
        <taxon>Eutheria</taxon>
        <taxon>Euarchontoglires</taxon>
        <taxon>Glires</taxon>
        <taxon>Rodentia</taxon>
        <taxon>Myomorpha</taxon>
        <taxon>Muroidea</taxon>
        <taxon>Muridae</taxon>
        <taxon>Murinae</taxon>
        <taxon>Mus</taxon>
        <taxon>Mus</taxon>
    </lineage>
</organism>
<name>TMPS4_MOUSE</name>
<protein>
    <recommendedName>
        <fullName evidence="8">Transmembrane protease serine 4</fullName>
        <ecNumber>3.4.21.-</ecNumber>
    </recommendedName>
    <alternativeName>
        <fullName evidence="7">Channel-activating protease 4</fullName>
        <shortName evidence="7">mCAP2</shortName>
    </alternativeName>
    <component>
        <recommendedName>
            <fullName evidence="2">Transmembrane protease serine 4 catalytic chain</fullName>
        </recommendedName>
    </component>
</protein>
<keyword id="KW-1003">Cell membrane</keyword>
<keyword id="KW-1015">Disulfide bond</keyword>
<keyword id="KW-0325">Glycoprotein</keyword>
<keyword id="KW-0378">Hydrolase</keyword>
<keyword id="KW-0472">Membrane</keyword>
<keyword id="KW-0645">Protease</keyword>
<keyword id="KW-1185">Reference proteome</keyword>
<keyword id="KW-0964">Secreted</keyword>
<keyword id="KW-0720">Serine protease</keyword>
<keyword id="KW-0735">Signal-anchor</keyword>
<keyword id="KW-0812">Transmembrane</keyword>
<keyword id="KW-1133">Transmembrane helix</keyword>